<accession>Q1MMB8</accession>
<gene>
    <name evidence="1" type="primary">ybeY</name>
    <name type="ordered locus">RL0393</name>
</gene>
<reference key="1">
    <citation type="journal article" date="2006" name="Genome Biol.">
        <title>The genome of Rhizobium leguminosarum has recognizable core and accessory components.</title>
        <authorList>
            <person name="Young J.P.W."/>
            <person name="Crossman L.C."/>
            <person name="Johnston A.W.B."/>
            <person name="Thomson N.R."/>
            <person name="Ghazoui Z.F."/>
            <person name="Hull K.H."/>
            <person name="Wexler M."/>
            <person name="Curson A.R.J."/>
            <person name="Todd J.D."/>
            <person name="Poole P.S."/>
            <person name="Mauchline T.H."/>
            <person name="East A.K."/>
            <person name="Quail M.A."/>
            <person name="Churcher C."/>
            <person name="Arrowsmith C."/>
            <person name="Cherevach I."/>
            <person name="Chillingworth T."/>
            <person name="Clarke K."/>
            <person name="Cronin A."/>
            <person name="Davis P."/>
            <person name="Fraser A."/>
            <person name="Hance Z."/>
            <person name="Hauser H."/>
            <person name="Jagels K."/>
            <person name="Moule S."/>
            <person name="Mungall K."/>
            <person name="Norbertczak H."/>
            <person name="Rabbinowitsch E."/>
            <person name="Sanders M."/>
            <person name="Simmonds M."/>
            <person name="Whitehead S."/>
            <person name="Parkhill J."/>
        </authorList>
    </citation>
    <scope>NUCLEOTIDE SEQUENCE [LARGE SCALE GENOMIC DNA]</scope>
    <source>
        <strain>DSM 114642 / LMG 32736 / 3841</strain>
    </source>
</reference>
<evidence type="ECO:0000255" key="1">
    <source>
        <dbReference type="HAMAP-Rule" id="MF_00009"/>
    </source>
</evidence>
<sequence>MAELDIQISVEDIGWPGEETLLSFCERVLGAAAVYLRDSEKQPFPTMAPEVSLVFTDDASIQDINAEWRGKDKATNVLSFPAFPVQPGKMPGPMLGDIIIARETLEREAAELEKSFDDHLTHLLVHGFLHLLGYDHMNSAEAEIMEGLETRILAQLGLSDPYEGQDLKMEP</sequence>
<comment type="function">
    <text evidence="1">Single strand-specific metallo-endoribonuclease involved in late-stage 70S ribosome quality control and in maturation of the 3' terminus of the 16S rRNA.</text>
</comment>
<comment type="cofactor">
    <cofactor evidence="1">
        <name>Zn(2+)</name>
        <dbReference type="ChEBI" id="CHEBI:29105"/>
    </cofactor>
    <text evidence="1">Binds 1 zinc ion.</text>
</comment>
<comment type="subcellular location">
    <subcellularLocation>
        <location evidence="1">Cytoplasm</location>
    </subcellularLocation>
</comment>
<comment type="similarity">
    <text evidence="1">Belongs to the endoribonuclease YbeY family.</text>
</comment>
<proteinExistence type="inferred from homology"/>
<name>YBEY_RHIJ3</name>
<keyword id="KW-0963">Cytoplasm</keyword>
<keyword id="KW-0255">Endonuclease</keyword>
<keyword id="KW-0378">Hydrolase</keyword>
<keyword id="KW-0479">Metal-binding</keyword>
<keyword id="KW-0540">Nuclease</keyword>
<keyword id="KW-0690">Ribosome biogenesis</keyword>
<keyword id="KW-0698">rRNA processing</keyword>
<keyword id="KW-0862">Zinc</keyword>
<dbReference type="EC" id="3.1.-.-" evidence="1"/>
<dbReference type="EMBL" id="AM236080">
    <property type="protein sequence ID" value="CAK05884.1"/>
    <property type="molecule type" value="Genomic_DNA"/>
</dbReference>
<dbReference type="RefSeq" id="WP_011650190.1">
    <property type="nucleotide sequence ID" value="NC_008380.1"/>
</dbReference>
<dbReference type="SMR" id="Q1MMB8"/>
<dbReference type="EnsemblBacteria" id="CAK05884">
    <property type="protein sequence ID" value="CAK05884"/>
    <property type="gene ID" value="RL0393"/>
</dbReference>
<dbReference type="KEGG" id="rle:RL0393"/>
<dbReference type="eggNOG" id="COG0319">
    <property type="taxonomic scope" value="Bacteria"/>
</dbReference>
<dbReference type="HOGENOM" id="CLU_106710_0_0_5"/>
<dbReference type="Proteomes" id="UP000006575">
    <property type="component" value="Chromosome"/>
</dbReference>
<dbReference type="GO" id="GO:0005737">
    <property type="term" value="C:cytoplasm"/>
    <property type="evidence" value="ECO:0007669"/>
    <property type="project" value="UniProtKB-SubCell"/>
</dbReference>
<dbReference type="GO" id="GO:0004222">
    <property type="term" value="F:metalloendopeptidase activity"/>
    <property type="evidence" value="ECO:0007669"/>
    <property type="project" value="InterPro"/>
</dbReference>
<dbReference type="GO" id="GO:0004521">
    <property type="term" value="F:RNA endonuclease activity"/>
    <property type="evidence" value="ECO:0007669"/>
    <property type="project" value="UniProtKB-UniRule"/>
</dbReference>
<dbReference type="GO" id="GO:0008270">
    <property type="term" value="F:zinc ion binding"/>
    <property type="evidence" value="ECO:0007669"/>
    <property type="project" value="UniProtKB-UniRule"/>
</dbReference>
<dbReference type="GO" id="GO:0006364">
    <property type="term" value="P:rRNA processing"/>
    <property type="evidence" value="ECO:0007669"/>
    <property type="project" value="UniProtKB-UniRule"/>
</dbReference>
<dbReference type="Gene3D" id="3.40.390.30">
    <property type="entry name" value="Metalloproteases ('zincins'), catalytic domain"/>
    <property type="match status" value="1"/>
</dbReference>
<dbReference type="HAMAP" id="MF_00009">
    <property type="entry name" value="Endoribonucl_YbeY"/>
    <property type="match status" value="1"/>
</dbReference>
<dbReference type="InterPro" id="IPR023091">
    <property type="entry name" value="MetalPrtase_cat_dom_sf_prd"/>
</dbReference>
<dbReference type="InterPro" id="IPR002036">
    <property type="entry name" value="YbeY"/>
</dbReference>
<dbReference type="InterPro" id="IPR020549">
    <property type="entry name" value="YbeY_CS"/>
</dbReference>
<dbReference type="NCBIfam" id="TIGR00043">
    <property type="entry name" value="rRNA maturation RNase YbeY"/>
    <property type="match status" value="1"/>
</dbReference>
<dbReference type="PANTHER" id="PTHR46986">
    <property type="entry name" value="ENDORIBONUCLEASE YBEY, CHLOROPLASTIC"/>
    <property type="match status" value="1"/>
</dbReference>
<dbReference type="PANTHER" id="PTHR46986:SF1">
    <property type="entry name" value="ENDORIBONUCLEASE YBEY, CHLOROPLASTIC"/>
    <property type="match status" value="1"/>
</dbReference>
<dbReference type="Pfam" id="PF02130">
    <property type="entry name" value="YbeY"/>
    <property type="match status" value="1"/>
</dbReference>
<dbReference type="SUPFAM" id="SSF55486">
    <property type="entry name" value="Metalloproteases ('zincins'), catalytic domain"/>
    <property type="match status" value="1"/>
</dbReference>
<dbReference type="PROSITE" id="PS01306">
    <property type="entry name" value="UPF0054"/>
    <property type="match status" value="1"/>
</dbReference>
<protein>
    <recommendedName>
        <fullName evidence="1">Endoribonuclease YbeY</fullName>
        <ecNumber evidence="1">3.1.-.-</ecNumber>
    </recommendedName>
</protein>
<feature type="chain" id="PRO_0000284288" description="Endoribonuclease YbeY">
    <location>
        <begin position="1"/>
        <end position="171"/>
    </location>
</feature>
<feature type="binding site" evidence="1">
    <location>
        <position position="126"/>
    </location>
    <ligand>
        <name>Zn(2+)</name>
        <dbReference type="ChEBI" id="CHEBI:29105"/>
        <note>catalytic</note>
    </ligand>
</feature>
<feature type="binding site" evidence="1">
    <location>
        <position position="130"/>
    </location>
    <ligand>
        <name>Zn(2+)</name>
        <dbReference type="ChEBI" id="CHEBI:29105"/>
        <note>catalytic</note>
    </ligand>
</feature>
<feature type="binding site" evidence="1">
    <location>
        <position position="136"/>
    </location>
    <ligand>
        <name>Zn(2+)</name>
        <dbReference type="ChEBI" id="CHEBI:29105"/>
        <note>catalytic</note>
    </ligand>
</feature>
<organism>
    <name type="scientific">Rhizobium johnstonii (strain DSM 114642 / LMG 32736 / 3841)</name>
    <name type="common">Rhizobium leguminosarum bv. viciae</name>
    <dbReference type="NCBI Taxonomy" id="216596"/>
    <lineage>
        <taxon>Bacteria</taxon>
        <taxon>Pseudomonadati</taxon>
        <taxon>Pseudomonadota</taxon>
        <taxon>Alphaproteobacteria</taxon>
        <taxon>Hyphomicrobiales</taxon>
        <taxon>Rhizobiaceae</taxon>
        <taxon>Rhizobium/Agrobacterium group</taxon>
        <taxon>Rhizobium</taxon>
        <taxon>Rhizobium johnstonii</taxon>
    </lineage>
</organism>